<dbReference type="EC" id="3.4.16.6"/>
<dbReference type="EMBL" id="CR382128">
    <property type="protein sequence ID" value="CAG82750.1"/>
    <property type="molecule type" value="Genomic_DNA"/>
</dbReference>
<dbReference type="RefSeq" id="XP_500519.1">
    <property type="nucleotide sequence ID" value="XM_500519.1"/>
</dbReference>
<dbReference type="SMR" id="Q6CFP3"/>
<dbReference type="FunCoup" id="Q6CFP3">
    <property type="interactions" value="107"/>
</dbReference>
<dbReference type="STRING" id="284591.Q6CFP3"/>
<dbReference type="ESTHER" id="yarli-q6cfp3">
    <property type="family name" value="Carboxypeptidase_S10"/>
</dbReference>
<dbReference type="MEROPS" id="S10.007"/>
<dbReference type="GlyCosmos" id="Q6CFP3">
    <property type="glycosylation" value="3 sites, No reported glycans"/>
</dbReference>
<dbReference type="EnsemblFungi" id="CAG82750">
    <property type="protein sequence ID" value="CAG82750"/>
    <property type="gene ID" value="YALI0_B05170g"/>
</dbReference>
<dbReference type="KEGG" id="yli:2906626"/>
<dbReference type="VEuPathDB" id="FungiDB:YALI0_B05170g"/>
<dbReference type="HOGENOM" id="CLU_008523_11_0_1"/>
<dbReference type="InParanoid" id="Q6CFP3"/>
<dbReference type="OMA" id="EMADQFV"/>
<dbReference type="OrthoDB" id="3167at4891"/>
<dbReference type="Proteomes" id="UP000001300">
    <property type="component" value="Chromosome B"/>
</dbReference>
<dbReference type="GO" id="GO:0016020">
    <property type="term" value="C:membrane"/>
    <property type="evidence" value="ECO:0007669"/>
    <property type="project" value="UniProtKB-KW"/>
</dbReference>
<dbReference type="GO" id="GO:0005802">
    <property type="term" value="C:trans-Golgi network"/>
    <property type="evidence" value="ECO:0000318"/>
    <property type="project" value="GO_Central"/>
</dbReference>
<dbReference type="GO" id="GO:0004185">
    <property type="term" value="F:serine-type carboxypeptidase activity"/>
    <property type="evidence" value="ECO:0000318"/>
    <property type="project" value="GO_Central"/>
</dbReference>
<dbReference type="GO" id="GO:0006915">
    <property type="term" value="P:apoptotic process"/>
    <property type="evidence" value="ECO:0007669"/>
    <property type="project" value="UniProtKB-KW"/>
</dbReference>
<dbReference type="GO" id="GO:0006508">
    <property type="term" value="P:proteolysis"/>
    <property type="evidence" value="ECO:0007669"/>
    <property type="project" value="UniProtKB-KW"/>
</dbReference>
<dbReference type="FunFam" id="3.40.50.1820:FF:000121">
    <property type="entry name" value="Carboxypeptidase D"/>
    <property type="match status" value="1"/>
</dbReference>
<dbReference type="Gene3D" id="3.40.50.1820">
    <property type="entry name" value="alpha/beta hydrolase"/>
    <property type="match status" value="1"/>
</dbReference>
<dbReference type="InterPro" id="IPR029058">
    <property type="entry name" value="AB_hydrolase_fold"/>
</dbReference>
<dbReference type="InterPro" id="IPR001563">
    <property type="entry name" value="Peptidase_S10"/>
</dbReference>
<dbReference type="InterPro" id="IPR033124">
    <property type="entry name" value="Ser_caboxypep_his_AS"/>
</dbReference>
<dbReference type="InterPro" id="IPR018202">
    <property type="entry name" value="Ser_caboxypep_ser_AS"/>
</dbReference>
<dbReference type="PANTHER" id="PTHR11802:SF190">
    <property type="entry name" value="PHEROMONE-PROCESSING CARBOXYPEPTIDASE KEX1"/>
    <property type="match status" value="1"/>
</dbReference>
<dbReference type="PANTHER" id="PTHR11802">
    <property type="entry name" value="SERINE PROTEASE FAMILY S10 SERINE CARBOXYPEPTIDASE"/>
    <property type="match status" value="1"/>
</dbReference>
<dbReference type="Pfam" id="PF00450">
    <property type="entry name" value="Peptidase_S10"/>
    <property type="match status" value="1"/>
</dbReference>
<dbReference type="PRINTS" id="PR00724">
    <property type="entry name" value="CRBOXYPTASEC"/>
</dbReference>
<dbReference type="SUPFAM" id="SSF53474">
    <property type="entry name" value="alpha/beta-Hydrolases"/>
    <property type="match status" value="1"/>
</dbReference>
<dbReference type="PROSITE" id="PS00560">
    <property type="entry name" value="CARBOXYPEPT_SER_HIS"/>
    <property type="match status" value="1"/>
</dbReference>
<dbReference type="PROSITE" id="PS00131">
    <property type="entry name" value="CARBOXYPEPT_SER_SER"/>
    <property type="match status" value="1"/>
</dbReference>
<reference key="1">
    <citation type="journal article" date="2004" name="Nature">
        <title>Genome evolution in yeasts.</title>
        <authorList>
            <person name="Dujon B."/>
            <person name="Sherman D."/>
            <person name="Fischer G."/>
            <person name="Durrens P."/>
            <person name="Casaregola S."/>
            <person name="Lafontaine I."/>
            <person name="de Montigny J."/>
            <person name="Marck C."/>
            <person name="Neuveglise C."/>
            <person name="Talla E."/>
            <person name="Goffard N."/>
            <person name="Frangeul L."/>
            <person name="Aigle M."/>
            <person name="Anthouard V."/>
            <person name="Babour A."/>
            <person name="Barbe V."/>
            <person name="Barnay S."/>
            <person name="Blanchin S."/>
            <person name="Beckerich J.-M."/>
            <person name="Beyne E."/>
            <person name="Bleykasten C."/>
            <person name="Boisrame A."/>
            <person name="Boyer J."/>
            <person name="Cattolico L."/>
            <person name="Confanioleri F."/>
            <person name="de Daruvar A."/>
            <person name="Despons L."/>
            <person name="Fabre E."/>
            <person name="Fairhead C."/>
            <person name="Ferry-Dumazet H."/>
            <person name="Groppi A."/>
            <person name="Hantraye F."/>
            <person name="Hennequin C."/>
            <person name="Jauniaux N."/>
            <person name="Joyet P."/>
            <person name="Kachouri R."/>
            <person name="Kerrest A."/>
            <person name="Koszul R."/>
            <person name="Lemaire M."/>
            <person name="Lesur I."/>
            <person name="Ma L."/>
            <person name="Muller H."/>
            <person name="Nicaud J.-M."/>
            <person name="Nikolski M."/>
            <person name="Oztas S."/>
            <person name="Ozier-Kalogeropoulos O."/>
            <person name="Pellenz S."/>
            <person name="Potier S."/>
            <person name="Richard G.-F."/>
            <person name="Straub M.-L."/>
            <person name="Suleau A."/>
            <person name="Swennen D."/>
            <person name="Tekaia F."/>
            <person name="Wesolowski-Louvel M."/>
            <person name="Westhof E."/>
            <person name="Wirth B."/>
            <person name="Zeniou-Meyer M."/>
            <person name="Zivanovic Y."/>
            <person name="Bolotin-Fukuhara M."/>
            <person name="Thierry A."/>
            <person name="Bouchier C."/>
            <person name="Caudron B."/>
            <person name="Scarpelli C."/>
            <person name="Gaillardin C."/>
            <person name="Weissenbach J."/>
            <person name="Wincker P."/>
            <person name="Souciet J.-L."/>
        </authorList>
    </citation>
    <scope>NUCLEOTIDE SEQUENCE [LARGE SCALE GENOMIC DNA]</scope>
    <source>
        <strain>CLIB 122 / E 150</strain>
    </source>
</reference>
<proteinExistence type="inferred from homology"/>
<gene>
    <name type="primary">KEX1</name>
    <name type="ordered locus">YALI0B05170g</name>
</gene>
<accession>Q6CFP3</accession>
<sequence length="614" mass="69331">MKLSWSLFCGLASLALSQFDEAPPSQSDYFVRHIPGLDSVDNYTMHSGNILTDAAHNGNLFFWLVEAQYKITERPKTIVWFNGGPGCSSMDGALLEVGPFRIVDDKLRVDPNKGSWHKYANVLFVDQPYGTGYSYSDTDSYLTGLGQVGDEMDSFMTQFLKLFPERAHDDFYLAGESYAGQYIPYIATKLQQTRTVDLKGLLIGNGWMDPANQYYQYVPYALDYGVIEKTEEHVKDLKELTDTCERAINIAKDKNNGRLPVHIRACEDIMNGIVELSRNERSAPESEGICVNYYDVSKEDKWPSCGMNWPEILPYVTDWLRQDATVQALNVNNDKQESWQECNGAVGSRMRQGNDDAAVYLLPDLLESMEILFFNGDRDLICNHYGNERMIEQLEWNGKKGWTEGLELDDWVVDGVSKGKKQSDRNLTYVRIYNASHMVPYDEPEACLTMLNDFIGVSKALSDLSGNKPGRGSENPSDLDDQKSGDQKSDDDSSSDDDDDAEHDKKIASDAMWKAYYQAGFTALIVVLIILGLAGFLFWRKNRGHIYQEETSLLGSCFGGISRWRNSSGGPLSNQQGTFDSRQRLMEPGEYYDLGEIAEEDEDAEELVIRRPEV</sequence>
<evidence type="ECO:0000250" key="1"/>
<evidence type="ECO:0000255" key="2"/>
<evidence type="ECO:0000256" key="3">
    <source>
        <dbReference type="SAM" id="MobiDB-lite"/>
    </source>
</evidence>
<evidence type="ECO:0000305" key="4"/>
<protein>
    <recommendedName>
        <fullName>Pheromone-processing carboxypeptidase KEX1</fullName>
        <ecNumber>3.4.16.6</ecNumber>
    </recommendedName>
    <alternativeName>
        <fullName>Carboxypeptidase D</fullName>
    </alternativeName>
</protein>
<comment type="function">
    <text evidence="1">Protease with a carboxypeptidase B-like function involved in the C-terminal processing of the lysine and arginine residues from protein precursors. Promotes cell fusion and is involved in the programmed cell death (By similarity).</text>
</comment>
<comment type="catalytic activity">
    <reaction>
        <text>Preferential release of a C-terminal arginine or lysine residue.</text>
        <dbReference type="EC" id="3.4.16.6"/>
    </reaction>
</comment>
<comment type="subcellular location">
    <subcellularLocation>
        <location evidence="1">Golgi apparatus</location>
        <location evidence="1">trans-Golgi network membrane</location>
        <topology evidence="1">Single-pass type I membrane protein</topology>
    </subcellularLocation>
</comment>
<comment type="similarity">
    <text evidence="4">Belongs to the peptidase S10 family.</text>
</comment>
<organism>
    <name type="scientific">Yarrowia lipolytica (strain CLIB 122 / E 150)</name>
    <name type="common">Yeast</name>
    <name type="synonym">Candida lipolytica</name>
    <dbReference type="NCBI Taxonomy" id="284591"/>
    <lineage>
        <taxon>Eukaryota</taxon>
        <taxon>Fungi</taxon>
        <taxon>Dikarya</taxon>
        <taxon>Ascomycota</taxon>
        <taxon>Saccharomycotina</taxon>
        <taxon>Dipodascomycetes</taxon>
        <taxon>Dipodascales</taxon>
        <taxon>Dipodascales incertae sedis</taxon>
        <taxon>Yarrowia</taxon>
    </lineage>
</organism>
<feature type="signal peptide" evidence="2">
    <location>
        <begin position="1"/>
        <end position="17"/>
    </location>
</feature>
<feature type="chain" id="PRO_0000411953" description="Pheromone-processing carboxypeptidase KEX1">
    <location>
        <begin position="18"/>
        <end position="614"/>
    </location>
</feature>
<feature type="topological domain" description="Lumenal" evidence="2">
    <location>
        <begin position="18"/>
        <end position="518"/>
    </location>
</feature>
<feature type="transmembrane region" description="Helical" evidence="2">
    <location>
        <begin position="519"/>
        <end position="539"/>
    </location>
</feature>
<feature type="topological domain" description="Cytoplasmic" evidence="2">
    <location>
        <begin position="540"/>
        <end position="614"/>
    </location>
</feature>
<feature type="region of interest" description="Disordered" evidence="3">
    <location>
        <begin position="465"/>
        <end position="503"/>
    </location>
</feature>
<feature type="compositionally biased region" description="Basic and acidic residues" evidence="3">
    <location>
        <begin position="480"/>
        <end position="491"/>
    </location>
</feature>
<feature type="compositionally biased region" description="Acidic residues" evidence="3">
    <location>
        <begin position="492"/>
        <end position="501"/>
    </location>
</feature>
<feature type="active site" evidence="1">
    <location>
        <position position="177"/>
    </location>
</feature>
<feature type="active site" evidence="1">
    <location>
        <position position="379"/>
    </location>
</feature>
<feature type="active site" evidence="1">
    <location>
        <position position="437"/>
    </location>
</feature>
<feature type="glycosylation site" description="N-linked (GlcNAc...) asparagine" evidence="2">
    <location>
        <position position="42"/>
    </location>
</feature>
<feature type="glycosylation site" description="N-linked (GlcNAc...) asparagine" evidence="2">
    <location>
        <position position="426"/>
    </location>
</feature>
<feature type="glycosylation site" description="N-linked (GlcNAc...) asparagine" evidence="2">
    <location>
        <position position="434"/>
    </location>
</feature>
<keyword id="KW-0053">Apoptosis</keyword>
<keyword id="KW-0121">Carboxypeptidase</keyword>
<keyword id="KW-0325">Glycoprotein</keyword>
<keyword id="KW-0333">Golgi apparatus</keyword>
<keyword id="KW-0378">Hydrolase</keyword>
<keyword id="KW-0472">Membrane</keyword>
<keyword id="KW-0645">Protease</keyword>
<keyword id="KW-1185">Reference proteome</keyword>
<keyword id="KW-0732">Signal</keyword>
<keyword id="KW-0812">Transmembrane</keyword>
<keyword id="KW-1133">Transmembrane helix</keyword>
<name>KEX1_YARLI</name>